<organism>
    <name type="scientific">Thermoplasma acidophilum (strain ATCC 25905 / DSM 1728 / JCM 9062 / NBRC 15155 / AMRC-C165)</name>
    <dbReference type="NCBI Taxonomy" id="273075"/>
    <lineage>
        <taxon>Archaea</taxon>
        <taxon>Methanobacteriati</taxon>
        <taxon>Thermoplasmatota</taxon>
        <taxon>Thermoplasmata</taxon>
        <taxon>Thermoplasmatales</taxon>
        <taxon>Thermoplasmataceae</taxon>
        <taxon>Thermoplasma</taxon>
    </lineage>
</organism>
<feature type="chain" id="PRO_0000155573" description="Ribosomal RNA large subunit methyltransferase E">
    <location>
        <begin position="1"/>
        <end position="205"/>
    </location>
</feature>
<feature type="active site" description="Proton acceptor" evidence="1">
    <location>
        <position position="151"/>
    </location>
</feature>
<feature type="binding site" evidence="1">
    <location>
        <position position="50"/>
    </location>
    <ligand>
        <name>S-adenosyl-L-methionine</name>
        <dbReference type="ChEBI" id="CHEBI:59789"/>
    </ligand>
</feature>
<feature type="binding site" evidence="1">
    <location>
        <position position="52"/>
    </location>
    <ligand>
        <name>S-adenosyl-L-methionine</name>
        <dbReference type="ChEBI" id="CHEBI:59789"/>
    </ligand>
</feature>
<feature type="binding site" evidence="1">
    <location>
        <position position="67"/>
    </location>
    <ligand>
        <name>S-adenosyl-L-methionine</name>
        <dbReference type="ChEBI" id="CHEBI:59789"/>
    </ligand>
</feature>
<feature type="binding site" evidence="1">
    <location>
        <position position="83"/>
    </location>
    <ligand>
        <name>S-adenosyl-L-methionine</name>
        <dbReference type="ChEBI" id="CHEBI:59789"/>
    </ligand>
</feature>
<feature type="binding site" evidence="1">
    <location>
        <position position="111"/>
    </location>
    <ligand>
        <name>S-adenosyl-L-methionine</name>
        <dbReference type="ChEBI" id="CHEBI:59789"/>
    </ligand>
</feature>
<dbReference type="EC" id="2.1.1.166" evidence="1"/>
<dbReference type="EMBL" id="AL445067">
    <property type="protein sequence ID" value="CAC12486.1"/>
    <property type="molecule type" value="Genomic_DNA"/>
</dbReference>
<dbReference type="RefSeq" id="WP_010901772.1">
    <property type="nucleotide sequence ID" value="NC_002578.1"/>
</dbReference>
<dbReference type="SMR" id="Q9HIH4"/>
<dbReference type="STRING" id="273075.gene:9572592"/>
<dbReference type="PaxDb" id="273075-Ta1365"/>
<dbReference type="EnsemblBacteria" id="CAC12486">
    <property type="protein sequence ID" value="CAC12486"/>
    <property type="gene ID" value="CAC12486"/>
</dbReference>
<dbReference type="KEGG" id="tac:Ta1365"/>
<dbReference type="eggNOG" id="arCOG00079">
    <property type="taxonomic scope" value="Archaea"/>
</dbReference>
<dbReference type="HOGENOM" id="CLU_009422_4_4_2"/>
<dbReference type="InParanoid" id="Q9HIH4"/>
<dbReference type="OrthoDB" id="26307at2157"/>
<dbReference type="Proteomes" id="UP000001024">
    <property type="component" value="Chromosome"/>
</dbReference>
<dbReference type="GO" id="GO:0005737">
    <property type="term" value="C:cytoplasm"/>
    <property type="evidence" value="ECO:0007669"/>
    <property type="project" value="UniProtKB-SubCell"/>
</dbReference>
<dbReference type="GO" id="GO:0008650">
    <property type="term" value="F:rRNA (uridine-2'-O-)-methyltransferase activity"/>
    <property type="evidence" value="ECO:0007669"/>
    <property type="project" value="UniProtKB-UniRule"/>
</dbReference>
<dbReference type="Gene3D" id="3.40.50.150">
    <property type="entry name" value="Vaccinia Virus protein VP39"/>
    <property type="match status" value="1"/>
</dbReference>
<dbReference type="HAMAP" id="MF_01547">
    <property type="entry name" value="RNA_methyltr_E"/>
    <property type="match status" value="1"/>
</dbReference>
<dbReference type="InterPro" id="IPR050082">
    <property type="entry name" value="RNA_methyltr_RlmE"/>
</dbReference>
<dbReference type="InterPro" id="IPR002877">
    <property type="entry name" value="RNA_MeTrfase_FtsJ_dom"/>
</dbReference>
<dbReference type="InterPro" id="IPR015507">
    <property type="entry name" value="rRNA-MeTfrase_E"/>
</dbReference>
<dbReference type="InterPro" id="IPR029063">
    <property type="entry name" value="SAM-dependent_MTases_sf"/>
</dbReference>
<dbReference type="PANTHER" id="PTHR10920:SF13">
    <property type="entry name" value="PRE-RRNA 2'-O-RIBOSE RNA METHYLTRANSFERASE FTSJ3"/>
    <property type="match status" value="1"/>
</dbReference>
<dbReference type="PANTHER" id="PTHR10920">
    <property type="entry name" value="RIBOSOMAL RNA METHYLTRANSFERASE"/>
    <property type="match status" value="1"/>
</dbReference>
<dbReference type="Pfam" id="PF01728">
    <property type="entry name" value="FtsJ"/>
    <property type="match status" value="1"/>
</dbReference>
<dbReference type="PIRSF" id="PIRSF005461">
    <property type="entry name" value="23S_rRNA_mtase"/>
    <property type="match status" value="1"/>
</dbReference>
<dbReference type="SUPFAM" id="SSF53335">
    <property type="entry name" value="S-adenosyl-L-methionine-dependent methyltransferases"/>
    <property type="match status" value="1"/>
</dbReference>
<gene>
    <name evidence="1" type="primary">rlmE</name>
    <name evidence="1" type="synonym">rrmJ</name>
    <name type="ordered locus">Ta1365</name>
</gene>
<name>RLME_THEAC</name>
<comment type="function">
    <text evidence="1">Specifically methylates the uridine in position 2552 of 23S rRNA at the 2'-O position of the ribose in the fully assembled 50S ribosomal subunit.</text>
</comment>
<comment type="catalytic activity">
    <reaction evidence="1">
        <text>uridine(2552) in 23S rRNA + S-adenosyl-L-methionine = 2'-O-methyluridine(2552) in 23S rRNA + S-adenosyl-L-homocysteine + H(+)</text>
        <dbReference type="Rhea" id="RHEA:42720"/>
        <dbReference type="Rhea" id="RHEA-COMP:10202"/>
        <dbReference type="Rhea" id="RHEA-COMP:10203"/>
        <dbReference type="ChEBI" id="CHEBI:15378"/>
        <dbReference type="ChEBI" id="CHEBI:57856"/>
        <dbReference type="ChEBI" id="CHEBI:59789"/>
        <dbReference type="ChEBI" id="CHEBI:65315"/>
        <dbReference type="ChEBI" id="CHEBI:74478"/>
        <dbReference type="EC" id="2.1.1.166"/>
    </reaction>
</comment>
<comment type="subcellular location">
    <subcellularLocation>
        <location evidence="1">Cytoplasm</location>
    </subcellularLocation>
</comment>
<comment type="similarity">
    <text evidence="1">Belongs to the class I-like SAM-binding methyltransferase superfamily. RNA methyltransferase RlmE family.</text>
</comment>
<accession>Q9HIH4</accession>
<protein>
    <recommendedName>
        <fullName evidence="1">Ribosomal RNA large subunit methyltransferase E</fullName>
        <ecNumber evidence="1">2.1.1.166</ecNumber>
    </recommendedName>
    <alternativeName>
        <fullName evidence="1">23S rRNA Um2552 methyltransferase</fullName>
    </alternativeName>
    <alternativeName>
        <fullName evidence="1">rRNA (uridine-2'-O-)-methyltransferase</fullName>
    </alternativeName>
</protein>
<evidence type="ECO:0000255" key="1">
    <source>
        <dbReference type="HAMAP-Rule" id="MF_01547"/>
    </source>
</evidence>
<reference key="1">
    <citation type="journal article" date="2000" name="Nature">
        <title>The genome sequence of the thermoacidophilic scavenger Thermoplasma acidophilum.</title>
        <authorList>
            <person name="Ruepp A."/>
            <person name="Graml W."/>
            <person name="Santos-Martinez M.-L."/>
            <person name="Koretke K.K."/>
            <person name="Volker C."/>
            <person name="Mewes H.-W."/>
            <person name="Frishman D."/>
            <person name="Stocker S."/>
            <person name="Lupas A.N."/>
            <person name="Baumeister W."/>
        </authorList>
    </citation>
    <scope>NUCLEOTIDE SEQUENCE [LARGE SCALE GENOMIC DNA]</scope>
    <source>
        <strain>ATCC 25905 / DSM 1728 / JCM 9062 / NBRC 15155 / AMRC-C165</strain>
    </source>
</reference>
<sequence length="205" mass="23194">MSSDHRDQYYWRAKRDQFRSRAAYKLEFLIERYGIIKDGQAVLEIGSSPGGWTQVLVDHGCRVVAVDIQPMDEIPGVIFLKLNILREDAAERIREEMARSLVQRFDVVLSDAMAKTSGIRSSDHAASVMIGNAVMKIAMDTLRRGGVAVVKQFQGDMTGDFIKNWGHYFRDHRITKPPASRKESSEVYIIFYGFSGKETDNSVQG</sequence>
<keyword id="KW-0963">Cytoplasm</keyword>
<keyword id="KW-0489">Methyltransferase</keyword>
<keyword id="KW-1185">Reference proteome</keyword>
<keyword id="KW-0698">rRNA processing</keyword>
<keyword id="KW-0949">S-adenosyl-L-methionine</keyword>
<keyword id="KW-0808">Transferase</keyword>
<proteinExistence type="inferred from homology"/>